<comment type="function">
    <text evidence="1">May have microbicidal activities.</text>
</comment>
<comment type="subcellular location">
    <subcellularLocation>
        <location evidence="1">Secreted</location>
    </subcellularLocation>
</comment>
<comment type="similarity">
    <text evidence="4">Belongs to the alpha-defensin family.</text>
</comment>
<sequence length="93" mass="10507">MKTLVLLSALILLAYQVQTDPIQNTDEETNTEEQPGEDDQAVSVSFGGQEGSALHEKLSRDLICLCRNRRCNRGELFYGTCAGPFLRCCRRRR</sequence>
<organism>
    <name type="scientific">Mus musculus</name>
    <name type="common">Mouse</name>
    <dbReference type="NCBI Taxonomy" id="10090"/>
    <lineage>
        <taxon>Eukaryota</taxon>
        <taxon>Metazoa</taxon>
        <taxon>Chordata</taxon>
        <taxon>Craniata</taxon>
        <taxon>Vertebrata</taxon>
        <taxon>Euteleostomi</taxon>
        <taxon>Mammalia</taxon>
        <taxon>Eutheria</taxon>
        <taxon>Euarchontoglires</taxon>
        <taxon>Glires</taxon>
        <taxon>Rodentia</taxon>
        <taxon>Myomorpha</taxon>
        <taxon>Muroidea</taxon>
        <taxon>Muridae</taxon>
        <taxon>Murinae</taxon>
        <taxon>Mus</taxon>
        <taxon>Mus</taxon>
    </lineage>
</organism>
<protein>
    <recommendedName>
        <fullName>Alpha-defensin 21</fullName>
    </recommendedName>
    <alternativeName>
        <fullName>Defensin-related cryptdin-21</fullName>
    </alternativeName>
</protein>
<keyword id="KW-0044">Antibiotic</keyword>
<keyword id="KW-0929">Antimicrobial</keyword>
<keyword id="KW-0211">Defensin</keyword>
<keyword id="KW-1015">Disulfide bond</keyword>
<keyword id="KW-1185">Reference proteome</keyword>
<keyword id="KW-0964">Secreted</keyword>
<keyword id="KW-0732">Signal</keyword>
<accession>Q8C1P2</accession>
<name>DFA21_MOUSE</name>
<gene>
    <name type="primary">Defa21</name>
    <name type="synonym">Defcr21</name>
</gene>
<dbReference type="EMBL" id="AY746426">
    <property type="protein sequence ID" value="AAW78335.1"/>
    <property type="molecule type" value="mRNA"/>
</dbReference>
<dbReference type="EMBL" id="AK008266">
    <property type="protein sequence ID" value="BAC25211.1"/>
    <property type="molecule type" value="mRNA"/>
</dbReference>
<dbReference type="CCDS" id="CCDS40264.1"/>
<dbReference type="RefSeq" id="NP_899076.1">
    <property type="nucleotide sequence ID" value="NM_183253.3"/>
</dbReference>
<dbReference type="SMR" id="Q8C1P2"/>
<dbReference type="FunCoup" id="Q8C1P2">
    <property type="interactions" value="116"/>
</dbReference>
<dbReference type="STRING" id="10090.ENSMUSP00000076041"/>
<dbReference type="PaxDb" id="10090-ENSMUSP00000076041"/>
<dbReference type="PeptideAtlas" id="Q8C1P2"/>
<dbReference type="DNASU" id="66298"/>
<dbReference type="Ensembl" id="ENSMUST00000076754.3">
    <property type="protein sequence ID" value="ENSMUSP00000076041.3"/>
    <property type="gene ID" value="ENSMUSG00000074447.3"/>
</dbReference>
<dbReference type="GeneID" id="66298"/>
<dbReference type="KEGG" id="mmu:66298"/>
<dbReference type="UCSC" id="uc009lbj.2">
    <property type="organism name" value="mouse"/>
</dbReference>
<dbReference type="AGR" id="MGI:1913548"/>
<dbReference type="CTD" id="66298"/>
<dbReference type="MGI" id="MGI:1913548">
    <property type="gene designation" value="Defa21"/>
</dbReference>
<dbReference type="VEuPathDB" id="HostDB:ENSMUSG00000074447"/>
<dbReference type="GeneTree" id="ENSGT00940000153268"/>
<dbReference type="HOGENOM" id="CLU_160803_0_0_1"/>
<dbReference type="InParanoid" id="Q8C1P2"/>
<dbReference type="OrthoDB" id="87565at9989"/>
<dbReference type="PhylomeDB" id="Q8C1P2"/>
<dbReference type="TreeFam" id="TF338414"/>
<dbReference type="Reactome" id="R-MMU-1461973">
    <property type="pathway name" value="Defensins"/>
</dbReference>
<dbReference type="Reactome" id="R-MMU-1462054">
    <property type="pathway name" value="Alpha-defensins"/>
</dbReference>
<dbReference type="Reactome" id="R-MMU-6798695">
    <property type="pathway name" value="Neutrophil degranulation"/>
</dbReference>
<dbReference type="BioGRID-ORCS" id="66298">
    <property type="hits" value="5 hits in 43 CRISPR screens"/>
</dbReference>
<dbReference type="PRO" id="PR:Q8C1P2"/>
<dbReference type="Proteomes" id="UP000000589">
    <property type="component" value="Chromosome 8"/>
</dbReference>
<dbReference type="RNAct" id="Q8C1P2">
    <property type="molecule type" value="protein"/>
</dbReference>
<dbReference type="Bgee" id="ENSMUSG00000074447">
    <property type="expression patterns" value="Expressed in ileum and 17 other cell types or tissues"/>
</dbReference>
<dbReference type="GO" id="GO:0005615">
    <property type="term" value="C:extracellular space"/>
    <property type="evidence" value="ECO:0007669"/>
    <property type="project" value="InterPro"/>
</dbReference>
<dbReference type="GO" id="GO:0042742">
    <property type="term" value="P:defense response to bacterium"/>
    <property type="evidence" value="ECO:0007669"/>
    <property type="project" value="UniProtKB-KW"/>
</dbReference>
<dbReference type="InterPro" id="IPR016327">
    <property type="entry name" value="Alpha-defensin"/>
</dbReference>
<dbReference type="InterPro" id="IPR002366">
    <property type="entry name" value="Alpha-defensin_N"/>
</dbReference>
<dbReference type="InterPro" id="IPR001855">
    <property type="entry name" value="Defensin_beta-like"/>
</dbReference>
<dbReference type="PANTHER" id="PTHR11876">
    <property type="entry name" value="ALPHA-DEFENSIN 1"/>
    <property type="match status" value="1"/>
</dbReference>
<dbReference type="PANTHER" id="PTHR11876:SF2">
    <property type="entry name" value="ALPHA-DEFENSIN 1-RELATED"/>
    <property type="match status" value="1"/>
</dbReference>
<dbReference type="Pfam" id="PF00711">
    <property type="entry name" value="Defensin_beta"/>
    <property type="match status" value="1"/>
</dbReference>
<dbReference type="Pfam" id="PF00879">
    <property type="entry name" value="Defensin_propep"/>
    <property type="match status" value="1"/>
</dbReference>
<dbReference type="PIRSF" id="PIRSF001875">
    <property type="entry name" value="Alpha-defensin"/>
    <property type="match status" value="1"/>
</dbReference>
<dbReference type="SMART" id="SM01418">
    <property type="entry name" value="Defensin_propep"/>
    <property type="match status" value="1"/>
</dbReference>
<dbReference type="SUPFAM" id="SSF57392">
    <property type="entry name" value="Defensin-like"/>
    <property type="match status" value="1"/>
</dbReference>
<feature type="signal peptide" evidence="2">
    <location>
        <begin position="1"/>
        <end position="19"/>
    </location>
</feature>
<feature type="propeptide" id="PRO_0000300068" evidence="1">
    <location>
        <begin position="20"/>
        <end position="58"/>
    </location>
</feature>
<feature type="peptide" id="PRO_0000300069" description="Alpha-defensin 21">
    <location>
        <begin position="59"/>
        <end position="93"/>
    </location>
</feature>
<feature type="region of interest" description="Disordered" evidence="3">
    <location>
        <begin position="22"/>
        <end position="43"/>
    </location>
</feature>
<feature type="compositionally biased region" description="Acidic residues" evidence="3">
    <location>
        <begin position="25"/>
        <end position="40"/>
    </location>
</feature>
<feature type="disulfide bond" evidence="1">
    <location>
        <begin position="64"/>
        <end position="89"/>
    </location>
</feature>
<feature type="disulfide bond" evidence="1">
    <location>
        <begin position="66"/>
        <end position="81"/>
    </location>
</feature>
<feature type="disulfide bond" evidence="1">
    <location>
        <begin position="71"/>
        <end position="88"/>
    </location>
</feature>
<reference key="1">
    <citation type="journal article" date="2004" name="Physiol. Genomics">
        <title>Rapid evolution and diversification of mammalian alpha-defensins as revealed by comparative analysis of rodent and primate genes.</title>
        <authorList>
            <person name="Patil A."/>
            <person name="Hughes A.L."/>
            <person name="Zhang G."/>
        </authorList>
    </citation>
    <scope>NUCLEOTIDE SEQUENCE [MRNA]</scope>
</reference>
<reference key="2">
    <citation type="journal article" date="2005" name="Science">
        <title>The transcriptional landscape of the mammalian genome.</title>
        <authorList>
            <person name="Carninci P."/>
            <person name="Kasukawa T."/>
            <person name="Katayama S."/>
            <person name="Gough J."/>
            <person name="Frith M.C."/>
            <person name="Maeda N."/>
            <person name="Oyama R."/>
            <person name="Ravasi T."/>
            <person name="Lenhard B."/>
            <person name="Wells C."/>
            <person name="Kodzius R."/>
            <person name="Shimokawa K."/>
            <person name="Bajic V.B."/>
            <person name="Brenner S.E."/>
            <person name="Batalov S."/>
            <person name="Forrest A.R."/>
            <person name="Zavolan M."/>
            <person name="Davis M.J."/>
            <person name="Wilming L.G."/>
            <person name="Aidinis V."/>
            <person name="Allen J.E."/>
            <person name="Ambesi-Impiombato A."/>
            <person name="Apweiler R."/>
            <person name="Aturaliya R.N."/>
            <person name="Bailey T.L."/>
            <person name="Bansal M."/>
            <person name="Baxter L."/>
            <person name="Beisel K.W."/>
            <person name="Bersano T."/>
            <person name="Bono H."/>
            <person name="Chalk A.M."/>
            <person name="Chiu K.P."/>
            <person name="Choudhary V."/>
            <person name="Christoffels A."/>
            <person name="Clutterbuck D.R."/>
            <person name="Crowe M.L."/>
            <person name="Dalla E."/>
            <person name="Dalrymple B.P."/>
            <person name="de Bono B."/>
            <person name="Della Gatta G."/>
            <person name="di Bernardo D."/>
            <person name="Down T."/>
            <person name="Engstrom P."/>
            <person name="Fagiolini M."/>
            <person name="Faulkner G."/>
            <person name="Fletcher C.F."/>
            <person name="Fukushima T."/>
            <person name="Furuno M."/>
            <person name="Futaki S."/>
            <person name="Gariboldi M."/>
            <person name="Georgii-Hemming P."/>
            <person name="Gingeras T.R."/>
            <person name="Gojobori T."/>
            <person name="Green R.E."/>
            <person name="Gustincich S."/>
            <person name="Harbers M."/>
            <person name="Hayashi Y."/>
            <person name="Hensch T.K."/>
            <person name="Hirokawa N."/>
            <person name="Hill D."/>
            <person name="Huminiecki L."/>
            <person name="Iacono M."/>
            <person name="Ikeo K."/>
            <person name="Iwama A."/>
            <person name="Ishikawa T."/>
            <person name="Jakt M."/>
            <person name="Kanapin A."/>
            <person name="Katoh M."/>
            <person name="Kawasawa Y."/>
            <person name="Kelso J."/>
            <person name="Kitamura H."/>
            <person name="Kitano H."/>
            <person name="Kollias G."/>
            <person name="Krishnan S.P."/>
            <person name="Kruger A."/>
            <person name="Kummerfeld S.K."/>
            <person name="Kurochkin I.V."/>
            <person name="Lareau L.F."/>
            <person name="Lazarevic D."/>
            <person name="Lipovich L."/>
            <person name="Liu J."/>
            <person name="Liuni S."/>
            <person name="McWilliam S."/>
            <person name="Madan Babu M."/>
            <person name="Madera M."/>
            <person name="Marchionni L."/>
            <person name="Matsuda H."/>
            <person name="Matsuzawa S."/>
            <person name="Miki H."/>
            <person name="Mignone F."/>
            <person name="Miyake S."/>
            <person name="Morris K."/>
            <person name="Mottagui-Tabar S."/>
            <person name="Mulder N."/>
            <person name="Nakano N."/>
            <person name="Nakauchi H."/>
            <person name="Ng P."/>
            <person name="Nilsson R."/>
            <person name="Nishiguchi S."/>
            <person name="Nishikawa S."/>
            <person name="Nori F."/>
            <person name="Ohara O."/>
            <person name="Okazaki Y."/>
            <person name="Orlando V."/>
            <person name="Pang K.C."/>
            <person name="Pavan W.J."/>
            <person name="Pavesi G."/>
            <person name="Pesole G."/>
            <person name="Petrovsky N."/>
            <person name="Piazza S."/>
            <person name="Reed J."/>
            <person name="Reid J.F."/>
            <person name="Ring B.Z."/>
            <person name="Ringwald M."/>
            <person name="Rost B."/>
            <person name="Ruan Y."/>
            <person name="Salzberg S.L."/>
            <person name="Sandelin A."/>
            <person name="Schneider C."/>
            <person name="Schoenbach C."/>
            <person name="Sekiguchi K."/>
            <person name="Semple C.A."/>
            <person name="Seno S."/>
            <person name="Sessa L."/>
            <person name="Sheng Y."/>
            <person name="Shibata Y."/>
            <person name="Shimada H."/>
            <person name="Shimada K."/>
            <person name="Silva D."/>
            <person name="Sinclair B."/>
            <person name="Sperling S."/>
            <person name="Stupka E."/>
            <person name="Sugiura K."/>
            <person name="Sultana R."/>
            <person name="Takenaka Y."/>
            <person name="Taki K."/>
            <person name="Tammoja K."/>
            <person name="Tan S.L."/>
            <person name="Tang S."/>
            <person name="Taylor M.S."/>
            <person name="Tegner J."/>
            <person name="Teichmann S.A."/>
            <person name="Ueda H.R."/>
            <person name="van Nimwegen E."/>
            <person name="Verardo R."/>
            <person name="Wei C.L."/>
            <person name="Yagi K."/>
            <person name="Yamanishi H."/>
            <person name="Zabarovsky E."/>
            <person name="Zhu S."/>
            <person name="Zimmer A."/>
            <person name="Hide W."/>
            <person name="Bult C."/>
            <person name="Grimmond S.M."/>
            <person name="Teasdale R.D."/>
            <person name="Liu E.T."/>
            <person name="Brusic V."/>
            <person name="Quackenbush J."/>
            <person name="Wahlestedt C."/>
            <person name="Mattick J.S."/>
            <person name="Hume D.A."/>
            <person name="Kai C."/>
            <person name="Sasaki D."/>
            <person name="Tomaru Y."/>
            <person name="Fukuda S."/>
            <person name="Kanamori-Katayama M."/>
            <person name="Suzuki M."/>
            <person name="Aoki J."/>
            <person name="Arakawa T."/>
            <person name="Iida J."/>
            <person name="Imamura K."/>
            <person name="Itoh M."/>
            <person name="Kato T."/>
            <person name="Kawaji H."/>
            <person name="Kawagashira N."/>
            <person name="Kawashima T."/>
            <person name="Kojima M."/>
            <person name="Kondo S."/>
            <person name="Konno H."/>
            <person name="Nakano K."/>
            <person name="Ninomiya N."/>
            <person name="Nishio T."/>
            <person name="Okada M."/>
            <person name="Plessy C."/>
            <person name="Shibata K."/>
            <person name="Shiraki T."/>
            <person name="Suzuki S."/>
            <person name="Tagami M."/>
            <person name="Waki K."/>
            <person name="Watahiki A."/>
            <person name="Okamura-Oho Y."/>
            <person name="Suzuki H."/>
            <person name="Kawai J."/>
            <person name="Hayashizaki Y."/>
        </authorList>
    </citation>
    <scope>NUCLEOTIDE SEQUENCE [LARGE SCALE MRNA]</scope>
    <source>
        <strain>C57BL/6J</strain>
        <tissue>Small intestine</tissue>
    </source>
</reference>
<evidence type="ECO:0000250" key="1"/>
<evidence type="ECO:0000255" key="2"/>
<evidence type="ECO:0000256" key="3">
    <source>
        <dbReference type="SAM" id="MobiDB-lite"/>
    </source>
</evidence>
<evidence type="ECO:0000305" key="4"/>
<proteinExistence type="inferred from homology"/>